<accession>Q9Y8C2</accession>
<accession>C8VK56</accession>
<accession>Q5ARD7</accession>
<comment type="function">
    <text evidence="1">Acts as a sulfur carrier required for molybdopterin biosynthesis. Component of the molybdopterin synthase complex that catalyzes the conversion of precursor Z into molybdopterin by mediating the incorporation of 2 sulfur atoms into precursor Z to generate a dithiolene group. In the complex, serves as sulfur donor by being thiocarboxylated (-COSH) at its C-terminus by uba4. After interaction with MOCS2B, the sulfur is then transferred to precursor Z to form molybdopterin.</text>
</comment>
<comment type="pathway">
    <text evidence="1">Cofactor biosynthesis; molybdopterin biosynthesis.</text>
</comment>
<comment type="subunit">
    <text evidence="1">Heterotetramer; composed of 2 small (MOCS2A) and 2 large (MOCS2B) subunits.</text>
</comment>
<comment type="subcellular location">
    <subcellularLocation>
        <location evidence="1">Cytoplasm</location>
    </subcellularLocation>
</comment>
<comment type="PTM">
    <text evidence="1">C-terminal thiocarboxylation occurs in 2 steps, it is first acyl-adenylated (-COAMP) via the hesA/moeB/thiF part of uba4, then thiocarboxylated (-COSH) via the rhodanese domain of uba4.</text>
</comment>
<comment type="similarity">
    <text evidence="1">Belongs to the MoaD family. MOCS2A subfamily.</text>
</comment>
<name>MOC2A_EMENI</name>
<gene>
    <name evidence="1" type="primary">cnxG</name>
    <name type="ORF">AN9143</name>
</gene>
<dbReference type="EMBL" id="AF138284">
    <property type="protein sequence ID" value="AAD39470.1"/>
    <property type="molecule type" value="Genomic_DNA"/>
</dbReference>
<dbReference type="EMBL" id="AACD01000169">
    <property type="protein sequence ID" value="EAA61976.1"/>
    <property type="molecule type" value="Genomic_DNA"/>
</dbReference>
<dbReference type="EMBL" id="BN001306">
    <property type="protein sequence ID" value="CBF82462.1"/>
    <property type="molecule type" value="Genomic_DNA"/>
</dbReference>
<dbReference type="RefSeq" id="XP_682412.1">
    <property type="nucleotide sequence ID" value="XM_677320.1"/>
</dbReference>
<dbReference type="SMR" id="Q9Y8C2"/>
<dbReference type="STRING" id="227321.Q9Y8C2"/>
<dbReference type="EnsemblFungi" id="CBF82462">
    <property type="protein sequence ID" value="CBF82462"/>
    <property type="gene ID" value="ANIA_09143"/>
</dbReference>
<dbReference type="KEGG" id="ani:ANIA_09143"/>
<dbReference type="VEuPathDB" id="FungiDB:AN9143"/>
<dbReference type="eggNOG" id="ENOG502SD3I">
    <property type="taxonomic scope" value="Eukaryota"/>
</dbReference>
<dbReference type="HOGENOM" id="CLU_114601_6_1_1"/>
<dbReference type="InParanoid" id="Q9Y8C2"/>
<dbReference type="OMA" id="HYFSTAT"/>
<dbReference type="OrthoDB" id="5595860at2759"/>
<dbReference type="BRENDA" id="2.8.1.12">
    <property type="organism ID" value="517"/>
</dbReference>
<dbReference type="UniPathway" id="UPA00344"/>
<dbReference type="Proteomes" id="UP000000560">
    <property type="component" value="Chromosome VI"/>
</dbReference>
<dbReference type="GO" id="GO:1990133">
    <property type="term" value="C:molybdopterin adenylyltransferase complex"/>
    <property type="evidence" value="ECO:0000318"/>
    <property type="project" value="GO_Central"/>
</dbReference>
<dbReference type="GO" id="GO:1990140">
    <property type="term" value="C:molybdopterin synthase complex"/>
    <property type="evidence" value="ECO:0000250"/>
    <property type="project" value="UniProtKB"/>
</dbReference>
<dbReference type="GO" id="GO:0030366">
    <property type="term" value="F:molybdopterin synthase activity"/>
    <property type="evidence" value="ECO:0007669"/>
    <property type="project" value="UniProtKB-UniRule"/>
</dbReference>
<dbReference type="GO" id="GO:0000166">
    <property type="term" value="F:nucleotide binding"/>
    <property type="evidence" value="ECO:0007669"/>
    <property type="project" value="UniProtKB-KW"/>
</dbReference>
<dbReference type="GO" id="GO:0006777">
    <property type="term" value="P:Mo-molybdopterin cofactor biosynthetic process"/>
    <property type="evidence" value="ECO:0000250"/>
    <property type="project" value="UniProtKB"/>
</dbReference>
<dbReference type="GO" id="GO:0032324">
    <property type="term" value="P:molybdopterin cofactor biosynthetic process"/>
    <property type="evidence" value="ECO:0000315"/>
    <property type="project" value="AspGD"/>
</dbReference>
<dbReference type="CDD" id="cd00754">
    <property type="entry name" value="Ubl_MoaD"/>
    <property type="match status" value="1"/>
</dbReference>
<dbReference type="FunFam" id="3.10.20.30:FF:000010">
    <property type="entry name" value="Molybdopterin synthase sulfur carrier subunit"/>
    <property type="match status" value="1"/>
</dbReference>
<dbReference type="Gene3D" id="3.10.20.30">
    <property type="match status" value="1"/>
</dbReference>
<dbReference type="HAMAP" id="MF_03051">
    <property type="entry name" value="MOCS2A"/>
    <property type="match status" value="1"/>
</dbReference>
<dbReference type="InterPro" id="IPR012675">
    <property type="entry name" value="Beta-grasp_dom_sf"/>
</dbReference>
<dbReference type="InterPro" id="IPR044672">
    <property type="entry name" value="MOCS2A"/>
</dbReference>
<dbReference type="InterPro" id="IPR028887">
    <property type="entry name" value="MOCS2A_euk"/>
</dbReference>
<dbReference type="InterPro" id="IPR016155">
    <property type="entry name" value="Mopterin_synth/thiamin_S_b"/>
</dbReference>
<dbReference type="InterPro" id="IPR003749">
    <property type="entry name" value="ThiS/MoaD-like"/>
</dbReference>
<dbReference type="PANTHER" id="PTHR33359">
    <property type="entry name" value="MOLYBDOPTERIN SYNTHASE SULFUR CARRIER SUBUNIT"/>
    <property type="match status" value="1"/>
</dbReference>
<dbReference type="PANTHER" id="PTHR33359:SF1">
    <property type="entry name" value="MOLYBDOPTERIN SYNTHASE SULFUR CARRIER SUBUNIT"/>
    <property type="match status" value="1"/>
</dbReference>
<dbReference type="Pfam" id="PF02597">
    <property type="entry name" value="ThiS"/>
    <property type="match status" value="1"/>
</dbReference>
<dbReference type="SUPFAM" id="SSF54285">
    <property type="entry name" value="MoaD/ThiS"/>
    <property type="match status" value="1"/>
</dbReference>
<evidence type="ECO:0000255" key="1">
    <source>
        <dbReference type="HAMAP-Rule" id="MF_03051"/>
    </source>
</evidence>
<evidence type="ECO:0000269" key="2">
    <source>
    </source>
</evidence>
<sequence>MSTFQIHYFASASTYTGRNTESLPAPLPLSSLFDTLEAKYPGIKEKVLSSCSISLGDEYVDLVSDGEKSGNEGLLIQGGDEVAIIPPVSSG</sequence>
<reference key="1">
    <citation type="journal article" date="1999" name="J. Biol. Chem.">
        <title>Eukaryotic molybdopterin synthase. Biochemical and molecular studies of Aspergillus nidulans cnxG and cnxH mutants.</title>
        <authorList>
            <person name="Unkles S.E."/>
            <person name="Heck I.S."/>
            <person name="Appleyard M.V.C.L."/>
            <person name="Kinghorn J.R."/>
        </authorList>
    </citation>
    <scope>NUCLEOTIDE SEQUENCE [GENOMIC DNA]</scope>
    <scope>MUTAGENESIS OF TYR-8; ALA-10; ALA-12; GLU-21; ILE-84 AND GLY-91</scope>
</reference>
<reference key="2">
    <citation type="journal article" date="2005" name="Nature">
        <title>Sequencing of Aspergillus nidulans and comparative analysis with A. fumigatus and A. oryzae.</title>
        <authorList>
            <person name="Galagan J.E."/>
            <person name="Calvo S.E."/>
            <person name="Cuomo C."/>
            <person name="Ma L.-J."/>
            <person name="Wortman J.R."/>
            <person name="Batzoglou S."/>
            <person name="Lee S.-I."/>
            <person name="Bastuerkmen M."/>
            <person name="Spevak C.C."/>
            <person name="Clutterbuck J."/>
            <person name="Kapitonov V."/>
            <person name="Jurka J."/>
            <person name="Scazzocchio C."/>
            <person name="Farman M.L."/>
            <person name="Butler J."/>
            <person name="Purcell S."/>
            <person name="Harris S."/>
            <person name="Braus G.H."/>
            <person name="Draht O."/>
            <person name="Busch S."/>
            <person name="D'Enfert C."/>
            <person name="Bouchier C."/>
            <person name="Goldman G.H."/>
            <person name="Bell-Pedersen D."/>
            <person name="Griffiths-Jones S."/>
            <person name="Doonan J.H."/>
            <person name="Yu J."/>
            <person name="Vienken K."/>
            <person name="Pain A."/>
            <person name="Freitag M."/>
            <person name="Selker E.U."/>
            <person name="Archer D.B."/>
            <person name="Penalva M.A."/>
            <person name="Oakley B.R."/>
            <person name="Momany M."/>
            <person name="Tanaka T."/>
            <person name="Kumagai T."/>
            <person name="Asai K."/>
            <person name="Machida M."/>
            <person name="Nierman W.C."/>
            <person name="Denning D.W."/>
            <person name="Caddick M.X."/>
            <person name="Hynes M."/>
            <person name="Paoletti M."/>
            <person name="Fischer R."/>
            <person name="Miller B.L."/>
            <person name="Dyer P.S."/>
            <person name="Sachs M.S."/>
            <person name="Osmani S.A."/>
            <person name="Birren B.W."/>
        </authorList>
    </citation>
    <scope>NUCLEOTIDE SEQUENCE [LARGE SCALE GENOMIC DNA]</scope>
    <source>
        <strain>FGSC A4 / ATCC 38163 / CBS 112.46 / NRRL 194 / M139</strain>
    </source>
</reference>
<reference key="3">
    <citation type="journal article" date="2009" name="Fungal Genet. Biol.">
        <title>The 2008 update of the Aspergillus nidulans genome annotation: a community effort.</title>
        <authorList>
            <person name="Wortman J.R."/>
            <person name="Gilsenan J.M."/>
            <person name="Joardar V."/>
            <person name="Deegan J."/>
            <person name="Clutterbuck J."/>
            <person name="Andersen M.R."/>
            <person name="Archer D."/>
            <person name="Bencina M."/>
            <person name="Braus G."/>
            <person name="Coutinho P."/>
            <person name="von Dohren H."/>
            <person name="Doonan J."/>
            <person name="Driessen A.J."/>
            <person name="Durek P."/>
            <person name="Espeso E."/>
            <person name="Fekete E."/>
            <person name="Flipphi M."/>
            <person name="Estrada C.G."/>
            <person name="Geysens S."/>
            <person name="Goldman G."/>
            <person name="de Groot P.W."/>
            <person name="Hansen K."/>
            <person name="Harris S.D."/>
            <person name="Heinekamp T."/>
            <person name="Helmstaedt K."/>
            <person name="Henrissat B."/>
            <person name="Hofmann G."/>
            <person name="Homan T."/>
            <person name="Horio T."/>
            <person name="Horiuchi H."/>
            <person name="James S."/>
            <person name="Jones M."/>
            <person name="Karaffa L."/>
            <person name="Karanyi Z."/>
            <person name="Kato M."/>
            <person name="Keller N."/>
            <person name="Kelly D.E."/>
            <person name="Kiel J.A."/>
            <person name="Kim J.M."/>
            <person name="van der Klei I.J."/>
            <person name="Klis F.M."/>
            <person name="Kovalchuk A."/>
            <person name="Krasevec N."/>
            <person name="Kubicek C.P."/>
            <person name="Liu B."/>
            <person name="Maccabe A."/>
            <person name="Meyer V."/>
            <person name="Mirabito P."/>
            <person name="Miskei M."/>
            <person name="Mos M."/>
            <person name="Mullins J."/>
            <person name="Nelson D.R."/>
            <person name="Nielsen J."/>
            <person name="Oakley B.R."/>
            <person name="Osmani S.A."/>
            <person name="Pakula T."/>
            <person name="Paszewski A."/>
            <person name="Paulsen I."/>
            <person name="Pilsyk S."/>
            <person name="Pocsi I."/>
            <person name="Punt P.J."/>
            <person name="Ram A.F."/>
            <person name="Ren Q."/>
            <person name="Robellet X."/>
            <person name="Robson G."/>
            <person name="Seiboth B."/>
            <person name="van Solingen P."/>
            <person name="Specht T."/>
            <person name="Sun J."/>
            <person name="Taheri-Talesh N."/>
            <person name="Takeshita N."/>
            <person name="Ussery D."/>
            <person name="vanKuyk P.A."/>
            <person name="Visser H."/>
            <person name="van de Vondervoort P.J."/>
            <person name="de Vries R.P."/>
            <person name="Walton J."/>
            <person name="Xiang X."/>
            <person name="Xiong Y."/>
            <person name="Zeng A.P."/>
            <person name="Brandt B.W."/>
            <person name="Cornell M.J."/>
            <person name="van den Hondel C.A."/>
            <person name="Visser J."/>
            <person name="Oliver S.G."/>
            <person name="Turner G."/>
        </authorList>
    </citation>
    <scope>GENOME REANNOTATION</scope>
    <source>
        <strain>FGSC A4 / ATCC 38163 / CBS 112.46 / NRRL 194 / M139</strain>
    </source>
</reference>
<protein>
    <recommendedName>
        <fullName evidence="1">Molybdopterin synthase sulfur carrier subunit</fullName>
    </recommendedName>
    <alternativeName>
        <fullName evidence="1">Common component for nitrate reductase and xanthine dehydrogenase protein G</fullName>
    </alternativeName>
    <alternativeName>
        <fullName evidence="1">Molybdenum cofactor synthesis protein 2 small subunit</fullName>
    </alternativeName>
    <alternativeName>
        <fullName evidence="1">Molybdenum cofactor synthesis protein 2A</fullName>
        <shortName evidence="1">MOCS2A</shortName>
    </alternativeName>
    <alternativeName>
        <fullName evidence="1">Sulfur carrier protein MOCS2A</fullName>
    </alternativeName>
</protein>
<organism>
    <name type="scientific">Emericella nidulans (strain FGSC A4 / ATCC 38163 / CBS 112.46 / NRRL 194 / M139)</name>
    <name type="common">Aspergillus nidulans</name>
    <dbReference type="NCBI Taxonomy" id="227321"/>
    <lineage>
        <taxon>Eukaryota</taxon>
        <taxon>Fungi</taxon>
        <taxon>Dikarya</taxon>
        <taxon>Ascomycota</taxon>
        <taxon>Pezizomycotina</taxon>
        <taxon>Eurotiomycetes</taxon>
        <taxon>Eurotiomycetidae</taxon>
        <taxon>Eurotiales</taxon>
        <taxon>Aspergillaceae</taxon>
        <taxon>Aspergillus</taxon>
        <taxon>Aspergillus subgen. Nidulantes</taxon>
    </lineage>
</organism>
<proteinExistence type="evidence at protein level"/>
<keyword id="KW-0963">Cytoplasm</keyword>
<keyword id="KW-0501">Molybdenum cofactor biosynthesis</keyword>
<keyword id="KW-0547">Nucleotide-binding</keyword>
<keyword id="KW-0597">Phosphoprotein</keyword>
<keyword id="KW-1185">Reference proteome</keyword>
<feature type="chain" id="PRO_0000369322" description="Molybdopterin synthase sulfur carrier subunit">
    <location>
        <begin position="1"/>
        <end position="91"/>
    </location>
</feature>
<feature type="modified residue" description="1-thioglycine; alternate" evidence="1">
    <location>
        <position position="91"/>
    </location>
</feature>
<feature type="modified residue" description="Glycyl adenylate; alternate" evidence="1">
    <location>
        <position position="91"/>
    </location>
</feature>
<feature type="mutagenesis site" description="In cnxG141; impairs molybdopterin biosynthesis." evidence="2">
    <original>Y</original>
    <variation>C</variation>
    <location>
        <position position="8"/>
    </location>
</feature>
<feature type="mutagenesis site" description="In cnxG24; impairs molybdopterin biosynthesis." evidence="2">
    <original>A</original>
    <variation>D</variation>
    <location>
        <position position="10"/>
    </location>
</feature>
<feature type="mutagenesis site" description="In cnxG20; impairs molybdopterin biosynthesis." evidence="2">
    <original>A</original>
    <variation>V</variation>
    <location>
        <position position="12"/>
    </location>
</feature>
<feature type="mutagenesis site" description="In cnxG100; impairs molybdopterin biosynthesis." evidence="2">
    <original>E</original>
    <variation>K</variation>
    <location>
        <position position="21"/>
    </location>
</feature>
<feature type="mutagenesis site" description="In cnxG2; impairs molybdopterin biosynthesis." evidence="2">
    <original>I</original>
    <variation>N</variation>
    <location>
        <position position="84"/>
    </location>
</feature>
<feature type="mutagenesis site" description="In cnxG4; impairs molybdopterin biosynthesis." evidence="2">
    <original>G</original>
    <variation>R</variation>
    <location>
        <position position="91"/>
    </location>
</feature>